<reference key="1">
    <citation type="journal article" date="2006" name="J. Bacteriol.">
        <title>Complete genome sequence of Yersinia pestis strains Antiqua and Nepal516: evidence of gene reduction in an emerging pathogen.</title>
        <authorList>
            <person name="Chain P.S.G."/>
            <person name="Hu P."/>
            <person name="Malfatti S.A."/>
            <person name="Radnedge L."/>
            <person name="Larimer F."/>
            <person name="Vergez L.M."/>
            <person name="Worsham P."/>
            <person name="Chu M.C."/>
            <person name="Andersen G.L."/>
        </authorList>
    </citation>
    <scope>NUCLEOTIDE SEQUENCE [LARGE SCALE GENOMIC DNA]</scope>
    <source>
        <strain>Antiqua</strain>
    </source>
</reference>
<evidence type="ECO:0000255" key="1">
    <source>
        <dbReference type="HAMAP-Rule" id="MF_00509"/>
    </source>
</evidence>
<evidence type="ECO:0000256" key="2">
    <source>
        <dbReference type="SAM" id="MobiDB-lite"/>
    </source>
</evidence>
<gene>
    <name evidence="1" type="primary">zipA</name>
    <name type="ordered locus">YPA_2179</name>
</gene>
<organism>
    <name type="scientific">Yersinia pestis bv. Antiqua (strain Antiqua)</name>
    <dbReference type="NCBI Taxonomy" id="360102"/>
    <lineage>
        <taxon>Bacteria</taxon>
        <taxon>Pseudomonadati</taxon>
        <taxon>Pseudomonadota</taxon>
        <taxon>Gammaproteobacteria</taxon>
        <taxon>Enterobacterales</taxon>
        <taxon>Yersiniaceae</taxon>
        <taxon>Yersinia</taxon>
    </lineage>
</organism>
<dbReference type="EMBL" id="CP000308">
    <property type="protein sequence ID" value="ABG14144.1"/>
    <property type="molecule type" value="Genomic_DNA"/>
</dbReference>
<dbReference type="RefSeq" id="WP_002227089.1">
    <property type="nucleotide sequence ID" value="NZ_CP009906.1"/>
</dbReference>
<dbReference type="SMR" id="Q1C5X8"/>
<dbReference type="GeneID" id="57975708"/>
<dbReference type="KEGG" id="ypa:YPA_2179"/>
<dbReference type="Proteomes" id="UP000001971">
    <property type="component" value="Chromosome"/>
</dbReference>
<dbReference type="GO" id="GO:0032153">
    <property type="term" value="C:cell division site"/>
    <property type="evidence" value="ECO:0007669"/>
    <property type="project" value="UniProtKB-UniRule"/>
</dbReference>
<dbReference type="GO" id="GO:0005886">
    <property type="term" value="C:plasma membrane"/>
    <property type="evidence" value="ECO:0007669"/>
    <property type="project" value="UniProtKB-SubCell"/>
</dbReference>
<dbReference type="GO" id="GO:0000917">
    <property type="term" value="P:division septum assembly"/>
    <property type="evidence" value="ECO:0007669"/>
    <property type="project" value="TreeGrafter"/>
</dbReference>
<dbReference type="GO" id="GO:0043093">
    <property type="term" value="P:FtsZ-dependent cytokinesis"/>
    <property type="evidence" value="ECO:0007669"/>
    <property type="project" value="UniProtKB-UniRule"/>
</dbReference>
<dbReference type="CDD" id="cd00231">
    <property type="entry name" value="ZipA"/>
    <property type="match status" value="1"/>
</dbReference>
<dbReference type="FunFam" id="3.30.1400.10:FF:000001">
    <property type="entry name" value="Cell division protein ZipA"/>
    <property type="match status" value="1"/>
</dbReference>
<dbReference type="Gene3D" id="3.30.1400.10">
    <property type="entry name" value="ZipA, C-terminal FtsZ-binding domain"/>
    <property type="match status" value="1"/>
</dbReference>
<dbReference type="HAMAP" id="MF_00509">
    <property type="entry name" value="ZipA"/>
    <property type="match status" value="1"/>
</dbReference>
<dbReference type="InterPro" id="IPR011919">
    <property type="entry name" value="Cell_div_ZipA"/>
</dbReference>
<dbReference type="InterPro" id="IPR007449">
    <property type="entry name" value="ZipA_FtsZ-bd_C"/>
</dbReference>
<dbReference type="InterPro" id="IPR036765">
    <property type="entry name" value="ZipA_FtsZ-bd_C_sf"/>
</dbReference>
<dbReference type="NCBIfam" id="TIGR02205">
    <property type="entry name" value="septum_zipA"/>
    <property type="match status" value="1"/>
</dbReference>
<dbReference type="PANTHER" id="PTHR38685">
    <property type="entry name" value="CELL DIVISION PROTEIN ZIPA"/>
    <property type="match status" value="1"/>
</dbReference>
<dbReference type="PANTHER" id="PTHR38685:SF1">
    <property type="entry name" value="CELL DIVISION PROTEIN ZIPA"/>
    <property type="match status" value="1"/>
</dbReference>
<dbReference type="Pfam" id="PF04354">
    <property type="entry name" value="ZipA_C"/>
    <property type="match status" value="1"/>
</dbReference>
<dbReference type="SMART" id="SM00771">
    <property type="entry name" value="ZipA_C"/>
    <property type="match status" value="1"/>
</dbReference>
<dbReference type="SUPFAM" id="SSF64383">
    <property type="entry name" value="Cell-division protein ZipA, C-terminal domain"/>
    <property type="match status" value="1"/>
</dbReference>
<sequence>MMQDLRLILIVVGAIAIIALLLHGLWTSRKERSSLFRDRPVKRTKQERVETPIESLDEGVGEVRVRTSHPQEKPSFNHLDDDDDEVPVIQHAETKSAQVKTASRQAPFASVQTDYDDPLLGGLSAEQPPHDLSRDPLLGKADESYSQPQHAEPPHVEKPAHQVAPQQHVESQQEPVAPAPEAKPQKLKETVLVLHVAAHHGGVIGGEVLLQSVLQSGFQFGEMGIFHRHLSPAGSGPVLFSLANMVKPGSFDPDTMSDFSTPGVSMFMMVPSYGDANQNFKLMLQSAQRIADDVGGVVLDDERRMMTPQKLESYKARIREVLDANTIA</sequence>
<proteinExistence type="inferred from homology"/>
<protein>
    <recommendedName>
        <fullName evidence="1">Cell division protein ZipA</fullName>
    </recommendedName>
</protein>
<comment type="function">
    <text evidence="1">Essential cell division protein that stabilizes the FtsZ protofilaments by cross-linking them and that serves as a cytoplasmic membrane anchor for the Z ring. Also required for the recruitment to the septal ring of downstream cell division proteins.</text>
</comment>
<comment type="subunit">
    <text evidence="1">Interacts with FtsZ via their C-terminal domains.</text>
</comment>
<comment type="subcellular location">
    <subcellularLocation>
        <location evidence="1">Cell inner membrane</location>
        <topology evidence="1">Single-pass type I membrane protein</topology>
    </subcellularLocation>
    <text evidence="1">Localizes to the Z ring in an FtsZ-dependent manner.</text>
</comment>
<comment type="similarity">
    <text evidence="1">Belongs to the ZipA family.</text>
</comment>
<accession>Q1C5X8</accession>
<keyword id="KW-0131">Cell cycle</keyword>
<keyword id="KW-0132">Cell division</keyword>
<keyword id="KW-0997">Cell inner membrane</keyword>
<keyword id="KW-1003">Cell membrane</keyword>
<keyword id="KW-0472">Membrane</keyword>
<keyword id="KW-0812">Transmembrane</keyword>
<keyword id="KW-1133">Transmembrane helix</keyword>
<feature type="chain" id="PRO_0000258590" description="Cell division protein ZipA">
    <location>
        <begin position="1"/>
        <end position="328"/>
    </location>
</feature>
<feature type="topological domain" description="Periplasmic" evidence="1">
    <location>
        <begin position="1"/>
        <end position="6"/>
    </location>
</feature>
<feature type="transmembrane region" description="Helical" evidence="1">
    <location>
        <begin position="7"/>
        <end position="27"/>
    </location>
</feature>
<feature type="topological domain" description="Cytoplasmic" evidence="1">
    <location>
        <begin position="28"/>
        <end position="328"/>
    </location>
</feature>
<feature type="region of interest" description="Disordered" evidence="2">
    <location>
        <begin position="61"/>
        <end position="183"/>
    </location>
</feature>
<feature type="compositionally biased region" description="Basic and acidic residues" evidence="2">
    <location>
        <begin position="61"/>
        <end position="72"/>
    </location>
</feature>
<feature type="compositionally biased region" description="Polar residues" evidence="2">
    <location>
        <begin position="95"/>
        <end position="104"/>
    </location>
</feature>
<feature type="compositionally biased region" description="Polar residues" evidence="2">
    <location>
        <begin position="164"/>
        <end position="174"/>
    </location>
</feature>
<name>ZIPA_YERPA</name>